<gene>
    <name evidence="1" type="primary">psbN</name>
</gene>
<organism>
    <name type="scientific">Platanus occidentalis</name>
    <name type="common">Sycamore</name>
    <name type="synonym">American plane tree</name>
    <dbReference type="NCBI Taxonomy" id="4403"/>
    <lineage>
        <taxon>Eukaryota</taxon>
        <taxon>Viridiplantae</taxon>
        <taxon>Streptophyta</taxon>
        <taxon>Embryophyta</taxon>
        <taxon>Tracheophyta</taxon>
        <taxon>Spermatophyta</taxon>
        <taxon>Magnoliopsida</taxon>
        <taxon>Proteales</taxon>
        <taxon>Platanaceae</taxon>
        <taxon>Platanus</taxon>
    </lineage>
</organism>
<feature type="chain" id="PRO_0000207942" description="Protein PsbN">
    <location>
        <begin position="1"/>
        <end position="43"/>
    </location>
</feature>
<feature type="transmembrane region" description="Helical" evidence="1">
    <location>
        <begin position="5"/>
        <end position="27"/>
    </location>
</feature>
<evidence type="ECO:0000255" key="1">
    <source>
        <dbReference type="HAMAP-Rule" id="MF_00293"/>
    </source>
</evidence>
<geneLocation type="chloroplast"/>
<proteinExistence type="inferred from homology"/>
<accession>Q6EYF1</accession>
<accession>Q09G18</accession>
<dbReference type="EMBL" id="AF528909">
    <property type="protein sequence ID" value="AAQ09422.1"/>
    <property type="molecule type" value="Genomic_DNA"/>
</dbReference>
<dbReference type="EMBL" id="DQ923116">
    <property type="protein sequence ID" value="ABI49807.1"/>
    <property type="molecule type" value="Genomic_DNA"/>
</dbReference>
<dbReference type="RefSeq" id="YP_740593.1">
    <property type="nucleotide sequence ID" value="NC_008335.1"/>
</dbReference>
<dbReference type="SMR" id="Q6EYF1"/>
<dbReference type="GeneID" id="4271268"/>
<dbReference type="GO" id="GO:0009535">
    <property type="term" value="C:chloroplast thylakoid membrane"/>
    <property type="evidence" value="ECO:0007669"/>
    <property type="project" value="UniProtKB-SubCell"/>
</dbReference>
<dbReference type="GO" id="GO:0015979">
    <property type="term" value="P:photosynthesis"/>
    <property type="evidence" value="ECO:0007669"/>
    <property type="project" value="InterPro"/>
</dbReference>
<dbReference type="HAMAP" id="MF_00293">
    <property type="entry name" value="PSII_PsbN"/>
    <property type="match status" value="1"/>
</dbReference>
<dbReference type="InterPro" id="IPR003398">
    <property type="entry name" value="PSII_PsbN"/>
</dbReference>
<dbReference type="PANTHER" id="PTHR35326">
    <property type="entry name" value="PROTEIN PSBN"/>
    <property type="match status" value="1"/>
</dbReference>
<dbReference type="PANTHER" id="PTHR35326:SF3">
    <property type="entry name" value="PROTEIN PSBN"/>
    <property type="match status" value="1"/>
</dbReference>
<dbReference type="Pfam" id="PF02468">
    <property type="entry name" value="PsbN"/>
    <property type="match status" value="1"/>
</dbReference>
<sequence>METATLVAISISGSLVSFTGYALYTAFGQPSQQLRDPFEEHGD</sequence>
<reference key="1">
    <citation type="submission" date="2002-07" db="EMBL/GenBank/DDBJ databases">
        <title>Parsing out signal and noise for seed-plant phylogenetic inference.</title>
        <authorList>
            <person name="Graham S.W."/>
            <person name="Rai H.S."/>
            <person name="Ikegami K."/>
            <person name="Reeves P.A."/>
            <person name="Olmstead R.G."/>
        </authorList>
    </citation>
    <scope>NUCLEOTIDE SEQUENCE [GENOMIC DNA]</scope>
</reference>
<reference key="2">
    <citation type="journal article" date="2006" name="BMC Plant Biol.">
        <title>Rapid and accurate pyrosequencing of angiosperm plastid genomes.</title>
        <authorList>
            <person name="Moore M.J."/>
            <person name="Dhingra A."/>
            <person name="Soltis P.S."/>
            <person name="Shaw R."/>
            <person name="Farmerie W.G."/>
            <person name="Folta K.M."/>
            <person name="Soltis D.E."/>
        </authorList>
    </citation>
    <scope>NUCLEOTIDE SEQUENCE [LARGE SCALE GENOMIC DNA]</scope>
</reference>
<protein>
    <recommendedName>
        <fullName evidence="1">Protein PsbN</fullName>
    </recommendedName>
</protein>
<comment type="function">
    <text evidence="1">May play a role in photosystem I and II biogenesis.</text>
</comment>
<comment type="subcellular location">
    <subcellularLocation>
        <location evidence="1">Plastid</location>
        <location evidence="1">Chloroplast thylakoid membrane</location>
        <topology evidence="1">Single-pass membrane protein</topology>
    </subcellularLocation>
</comment>
<comment type="similarity">
    <text evidence="1">Belongs to the PsbN family.</text>
</comment>
<comment type="caution">
    <text evidence="1">Originally thought to be a component of PSII; based on experiments in Synechocystis, N.tabacum and barley, and its absence from PSII in T.elongatus and T.vulcanus, this is probably not true.</text>
</comment>
<name>PSBN_PLAOC</name>
<keyword id="KW-0150">Chloroplast</keyword>
<keyword id="KW-0472">Membrane</keyword>
<keyword id="KW-0934">Plastid</keyword>
<keyword id="KW-0793">Thylakoid</keyword>
<keyword id="KW-0812">Transmembrane</keyword>
<keyword id="KW-1133">Transmembrane helix</keyword>